<name>ARGD_VIBVY</name>
<proteinExistence type="inferred from homology"/>
<gene>
    <name evidence="1" type="primary">argD</name>
    <name type="ordered locus">VV3054</name>
</gene>
<accession>Q7MH19</accession>
<evidence type="ECO:0000255" key="1">
    <source>
        <dbReference type="HAMAP-Rule" id="MF_01107"/>
    </source>
</evidence>
<sequence length="403" mass="43516">MTVEMKVERGLFDEVMVPCYNPMEMIPVKGQGSRIWDQNGNEYIDFAGGIAVSCLGHCHPVMVNALTEQAGKLWHLSNVMTNEPALRLAKKLTEVSFAERVFFANSGAEANEAALKLARRYAADVYGPEKSEIIAFKQGFHGRTFFTVTVGGQAAYSDGFGPKPGDVTHLPYNDIEALQAHISDRTCAVMMEPLQGEGGIIPPTAEFIQAVRELCDKHNALLVFDEVQTGNGRTGEFYAYQGLGVTPDILSTAKSLGGGFPIGAMLTTAKLAEHLKVGTHGSTYGGNPLACAVAEAVVTEVSKPETLQGVKEREQWFREGLAKLNEKYQIFAEIRGKGLLLGAALNEQWQGRARDVLVAAGKEGLLVLVAGANVVRFTPSLVITKQEIEEGFAKLDKAIASLV</sequence>
<dbReference type="EC" id="2.6.1.11" evidence="1"/>
<dbReference type="EMBL" id="BA000037">
    <property type="protein sequence ID" value="BAC95818.1"/>
    <property type="molecule type" value="Genomic_DNA"/>
</dbReference>
<dbReference type="RefSeq" id="WP_011151317.1">
    <property type="nucleotide sequence ID" value="NC_005139.1"/>
</dbReference>
<dbReference type="SMR" id="Q7MH19"/>
<dbReference type="STRING" id="672.VV93_v1c27820"/>
<dbReference type="KEGG" id="vvy:VV3054"/>
<dbReference type="eggNOG" id="COG4992">
    <property type="taxonomic scope" value="Bacteria"/>
</dbReference>
<dbReference type="HOGENOM" id="CLU_016922_10_1_6"/>
<dbReference type="UniPathway" id="UPA00068">
    <property type="reaction ID" value="UER00109"/>
</dbReference>
<dbReference type="Proteomes" id="UP000002675">
    <property type="component" value="Chromosome I"/>
</dbReference>
<dbReference type="GO" id="GO:0005737">
    <property type="term" value="C:cytoplasm"/>
    <property type="evidence" value="ECO:0007669"/>
    <property type="project" value="UniProtKB-SubCell"/>
</dbReference>
<dbReference type="GO" id="GO:0042802">
    <property type="term" value="F:identical protein binding"/>
    <property type="evidence" value="ECO:0007669"/>
    <property type="project" value="TreeGrafter"/>
</dbReference>
<dbReference type="GO" id="GO:0003992">
    <property type="term" value="F:N2-acetyl-L-ornithine:2-oxoglutarate 5-aminotransferase activity"/>
    <property type="evidence" value="ECO:0007669"/>
    <property type="project" value="UniProtKB-UniRule"/>
</dbReference>
<dbReference type="GO" id="GO:0030170">
    <property type="term" value="F:pyridoxal phosphate binding"/>
    <property type="evidence" value="ECO:0007669"/>
    <property type="project" value="InterPro"/>
</dbReference>
<dbReference type="GO" id="GO:0006526">
    <property type="term" value="P:L-arginine biosynthetic process"/>
    <property type="evidence" value="ECO:0007669"/>
    <property type="project" value="UniProtKB-UniRule"/>
</dbReference>
<dbReference type="CDD" id="cd00610">
    <property type="entry name" value="OAT_like"/>
    <property type="match status" value="1"/>
</dbReference>
<dbReference type="FunFam" id="3.40.640.10:FF:000004">
    <property type="entry name" value="Acetylornithine aminotransferase"/>
    <property type="match status" value="1"/>
</dbReference>
<dbReference type="Gene3D" id="3.90.1150.10">
    <property type="entry name" value="Aspartate Aminotransferase, domain 1"/>
    <property type="match status" value="1"/>
</dbReference>
<dbReference type="Gene3D" id="3.40.640.10">
    <property type="entry name" value="Type I PLP-dependent aspartate aminotransferase-like (Major domain)"/>
    <property type="match status" value="1"/>
</dbReference>
<dbReference type="HAMAP" id="MF_01107">
    <property type="entry name" value="ArgD_aminotrans_3"/>
    <property type="match status" value="1"/>
</dbReference>
<dbReference type="InterPro" id="IPR017652">
    <property type="entry name" value="Ac/SucOrn_transaminase_bac"/>
</dbReference>
<dbReference type="InterPro" id="IPR004636">
    <property type="entry name" value="AcOrn/SuccOrn_fam"/>
</dbReference>
<dbReference type="InterPro" id="IPR005814">
    <property type="entry name" value="Aminotrans_3"/>
</dbReference>
<dbReference type="InterPro" id="IPR049704">
    <property type="entry name" value="Aminotrans_3_PPA_site"/>
</dbReference>
<dbReference type="InterPro" id="IPR050103">
    <property type="entry name" value="Class-III_PLP-dep_AT"/>
</dbReference>
<dbReference type="InterPro" id="IPR015424">
    <property type="entry name" value="PyrdxlP-dep_Trfase"/>
</dbReference>
<dbReference type="InterPro" id="IPR015421">
    <property type="entry name" value="PyrdxlP-dep_Trfase_major"/>
</dbReference>
<dbReference type="InterPro" id="IPR015422">
    <property type="entry name" value="PyrdxlP-dep_Trfase_small"/>
</dbReference>
<dbReference type="NCBIfam" id="TIGR03246">
    <property type="entry name" value="arg_catab_astC"/>
    <property type="match status" value="1"/>
</dbReference>
<dbReference type="NCBIfam" id="TIGR00707">
    <property type="entry name" value="argD"/>
    <property type="match status" value="1"/>
</dbReference>
<dbReference type="NCBIfam" id="NF002325">
    <property type="entry name" value="PRK01278.1"/>
    <property type="match status" value="1"/>
</dbReference>
<dbReference type="NCBIfam" id="NF003468">
    <property type="entry name" value="PRK05093.1"/>
    <property type="match status" value="1"/>
</dbReference>
<dbReference type="NCBIfam" id="NF009047">
    <property type="entry name" value="PRK12381.1"/>
    <property type="match status" value="1"/>
</dbReference>
<dbReference type="PANTHER" id="PTHR11986">
    <property type="entry name" value="AMINOTRANSFERASE CLASS III"/>
    <property type="match status" value="1"/>
</dbReference>
<dbReference type="PANTHER" id="PTHR11986:SF113">
    <property type="entry name" value="SUCCINYLORNITHINE TRANSAMINASE"/>
    <property type="match status" value="1"/>
</dbReference>
<dbReference type="Pfam" id="PF00202">
    <property type="entry name" value="Aminotran_3"/>
    <property type="match status" value="1"/>
</dbReference>
<dbReference type="PIRSF" id="PIRSF000521">
    <property type="entry name" value="Transaminase_4ab_Lys_Orn"/>
    <property type="match status" value="1"/>
</dbReference>
<dbReference type="SUPFAM" id="SSF53383">
    <property type="entry name" value="PLP-dependent transferases"/>
    <property type="match status" value="1"/>
</dbReference>
<dbReference type="PROSITE" id="PS00600">
    <property type="entry name" value="AA_TRANSFER_CLASS_3"/>
    <property type="match status" value="1"/>
</dbReference>
<protein>
    <recommendedName>
        <fullName evidence="1">Acetylornithine aminotransferase</fullName>
        <shortName evidence="1">ACOAT</shortName>
        <ecNumber evidence="1">2.6.1.11</ecNumber>
    </recommendedName>
</protein>
<reference key="1">
    <citation type="journal article" date="2003" name="Genome Res.">
        <title>Comparative genome analysis of Vibrio vulnificus, a marine pathogen.</title>
        <authorList>
            <person name="Chen C.-Y."/>
            <person name="Wu K.-M."/>
            <person name="Chang Y.-C."/>
            <person name="Chang C.-H."/>
            <person name="Tsai H.-C."/>
            <person name="Liao T.-L."/>
            <person name="Liu Y.-M."/>
            <person name="Chen H.-J."/>
            <person name="Shen A.B.-T."/>
            <person name="Li J.-C."/>
            <person name="Su T.-L."/>
            <person name="Shao C.-P."/>
            <person name="Lee C.-T."/>
            <person name="Hor L.-I."/>
            <person name="Tsai S.-F."/>
        </authorList>
    </citation>
    <scope>NUCLEOTIDE SEQUENCE [LARGE SCALE GENOMIC DNA]</scope>
    <source>
        <strain>YJ016</strain>
    </source>
</reference>
<feature type="chain" id="PRO_0000112811" description="Acetylornithine aminotransferase">
    <location>
        <begin position="1"/>
        <end position="403"/>
    </location>
</feature>
<feature type="binding site" evidence="1">
    <location>
        <begin position="107"/>
        <end position="108"/>
    </location>
    <ligand>
        <name>pyridoxal 5'-phosphate</name>
        <dbReference type="ChEBI" id="CHEBI:597326"/>
    </ligand>
</feature>
<feature type="binding site" evidence="1">
    <location>
        <position position="140"/>
    </location>
    <ligand>
        <name>pyridoxal 5'-phosphate</name>
        <dbReference type="ChEBI" id="CHEBI:597326"/>
    </ligand>
</feature>
<feature type="binding site" evidence="1">
    <location>
        <position position="143"/>
    </location>
    <ligand>
        <name>N(2)-acetyl-L-ornithine</name>
        <dbReference type="ChEBI" id="CHEBI:57805"/>
    </ligand>
</feature>
<feature type="binding site" evidence="1">
    <location>
        <begin position="225"/>
        <end position="228"/>
    </location>
    <ligand>
        <name>pyridoxal 5'-phosphate</name>
        <dbReference type="ChEBI" id="CHEBI:597326"/>
    </ligand>
</feature>
<feature type="binding site" evidence="1">
    <location>
        <position position="282"/>
    </location>
    <ligand>
        <name>N(2)-acetyl-L-ornithine</name>
        <dbReference type="ChEBI" id="CHEBI:57805"/>
    </ligand>
</feature>
<feature type="binding site" evidence="1">
    <location>
        <position position="283"/>
    </location>
    <ligand>
        <name>pyridoxal 5'-phosphate</name>
        <dbReference type="ChEBI" id="CHEBI:597326"/>
    </ligand>
</feature>
<feature type="modified residue" description="N6-(pyridoxal phosphate)lysine" evidence="1">
    <location>
        <position position="254"/>
    </location>
</feature>
<comment type="catalytic activity">
    <reaction evidence="1">
        <text>N(2)-acetyl-L-ornithine + 2-oxoglutarate = N-acetyl-L-glutamate 5-semialdehyde + L-glutamate</text>
        <dbReference type="Rhea" id="RHEA:18049"/>
        <dbReference type="ChEBI" id="CHEBI:16810"/>
        <dbReference type="ChEBI" id="CHEBI:29123"/>
        <dbReference type="ChEBI" id="CHEBI:29985"/>
        <dbReference type="ChEBI" id="CHEBI:57805"/>
        <dbReference type="EC" id="2.6.1.11"/>
    </reaction>
</comment>
<comment type="cofactor">
    <cofactor evidence="1">
        <name>pyridoxal 5'-phosphate</name>
        <dbReference type="ChEBI" id="CHEBI:597326"/>
    </cofactor>
    <text evidence="1">Binds 1 pyridoxal phosphate per subunit.</text>
</comment>
<comment type="pathway">
    <text evidence="1">Amino-acid biosynthesis; L-arginine biosynthesis; N(2)-acetyl-L-ornithine from L-glutamate: step 4/4.</text>
</comment>
<comment type="subunit">
    <text evidence="1">Homodimer.</text>
</comment>
<comment type="subcellular location">
    <subcellularLocation>
        <location evidence="1">Cytoplasm</location>
    </subcellularLocation>
</comment>
<comment type="miscellaneous">
    <text evidence="1">May also have succinyldiaminopimelate aminotransferase activity, thus carrying out the corresponding step in lysine biosynthesis.</text>
</comment>
<comment type="similarity">
    <text evidence="1">Belongs to the class-III pyridoxal-phosphate-dependent aminotransferase family. ArgD subfamily.</text>
</comment>
<organism>
    <name type="scientific">Vibrio vulnificus (strain YJ016)</name>
    <dbReference type="NCBI Taxonomy" id="196600"/>
    <lineage>
        <taxon>Bacteria</taxon>
        <taxon>Pseudomonadati</taxon>
        <taxon>Pseudomonadota</taxon>
        <taxon>Gammaproteobacteria</taxon>
        <taxon>Vibrionales</taxon>
        <taxon>Vibrionaceae</taxon>
        <taxon>Vibrio</taxon>
    </lineage>
</organism>
<keyword id="KW-0028">Amino-acid biosynthesis</keyword>
<keyword id="KW-0032">Aminotransferase</keyword>
<keyword id="KW-0055">Arginine biosynthesis</keyword>
<keyword id="KW-0963">Cytoplasm</keyword>
<keyword id="KW-0663">Pyridoxal phosphate</keyword>
<keyword id="KW-0808">Transferase</keyword>